<geneLocation type="chloroplast"/>
<accession>A1E9L2</accession>
<sequence>MYTSKQPFLKSKQPFSKSKQTFNKSKQPFRKSKQTFRKFKQPFRKSKQPFRRRPRIGPGDRIDYRNMSLINRFISEQGKILSRRINRLTLKQQRLITLAIKQARILSFLPFRNYENEKQFQAQSISIITGSRPRKNRHIPQLTQKYNSNRNLRNYNQNLRNNNRNLSSDC</sequence>
<organism>
    <name type="scientific">Hordeum vulgare</name>
    <name type="common">Barley</name>
    <dbReference type="NCBI Taxonomy" id="4513"/>
    <lineage>
        <taxon>Eukaryota</taxon>
        <taxon>Viridiplantae</taxon>
        <taxon>Streptophyta</taxon>
        <taxon>Embryophyta</taxon>
        <taxon>Tracheophyta</taxon>
        <taxon>Spermatophyta</taxon>
        <taxon>Magnoliopsida</taxon>
        <taxon>Liliopsida</taxon>
        <taxon>Poales</taxon>
        <taxon>Poaceae</taxon>
        <taxon>BOP clade</taxon>
        <taxon>Pooideae</taxon>
        <taxon>Triticodae</taxon>
        <taxon>Triticeae</taxon>
        <taxon>Hordeinae</taxon>
        <taxon>Hordeum</taxon>
    </lineage>
</organism>
<protein>
    <recommendedName>
        <fullName evidence="1">Small ribosomal subunit protein bS18c</fullName>
    </recommendedName>
    <alternativeName>
        <fullName evidence="3">30S ribosomal protein S18, chloroplastic</fullName>
    </alternativeName>
</protein>
<reference key="1">
    <citation type="journal article" date="2007" name="Theor. Appl. Genet.">
        <title>Complete chloroplast genome sequences of Hordeum vulgare, Sorghum bicolor and Agrostis stolonifera, and comparative analyses with other grass genomes.</title>
        <authorList>
            <person name="Saski C."/>
            <person name="Lee S.-B."/>
            <person name="Fjellheim S."/>
            <person name="Guda C."/>
            <person name="Jansen R.K."/>
            <person name="Luo H."/>
            <person name="Tomkins J."/>
            <person name="Rognli O.A."/>
            <person name="Daniell H."/>
            <person name="Clarke J.L."/>
        </authorList>
    </citation>
    <scope>NUCLEOTIDE SEQUENCE [LARGE SCALE GENOMIC DNA]</scope>
    <source>
        <strain>cv. Morex</strain>
    </source>
</reference>
<proteinExistence type="inferred from homology"/>
<feature type="chain" id="PRO_0000345587" description="Small ribosomal subunit protein bS18c">
    <location>
        <begin position="1"/>
        <end position="170"/>
    </location>
</feature>
<feature type="region of interest" description="Disordered" evidence="2">
    <location>
        <begin position="1"/>
        <end position="61"/>
    </location>
</feature>
<feature type="compositionally biased region" description="Polar residues" evidence="2">
    <location>
        <begin position="13"/>
        <end position="26"/>
    </location>
</feature>
<feature type="compositionally biased region" description="Basic residues" evidence="2">
    <location>
        <begin position="27"/>
        <end position="55"/>
    </location>
</feature>
<evidence type="ECO:0000255" key="1">
    <source>
        <dbReference type="HAMAP-Rule" id="MF_00270"/>
    </source>
</evidence>
<evidence type="ECO:0000256" key="2">
    <source>
        <dbReference type="SAM" id="MobiDB-lite"/>
    </source>
</evidence>
<evidence type="ECO:0000305" key="3"/>
<gene>
    <name evidence="1" type="primary">rps18</name>
</gene>
<keyword id="KW-0150">Chloroplast</keyword>
<keyword id="KW-0934">Plastid</keyword>
<keyword id="KW-0687">Ribonucleoprotein</keyword>
<keyword id="KW-0689">Ribosomal protein</keyword>
<keyword id="KW-0694">RNA-binding</keyword>
<keyword id="KW-0699">rRNA-binding</keyword>
<dbReference type="EMBL" id="EF115541">
    <property type="protein sequence ID" value="ABK79434.1"/>
    <property type="molecule type" value="Genomic_DNA"/>
</dbReference>
<dbReference type="RefSeq" id="YP_010144446.1">
    <property type="nucleotide sequence ID" value="NC_056985.1"/>
</dbReference>
<dbReference type="RefSeq" id="YP_874674.1">
    <property type="nucleotide sequence ID" value="NC_008590.1"/>
</dbReference>
<dbReference type="SMR" id="A1E9L2"/>
<dbReference type="GeneID" id="4525071"/>
<dbReference type="GeneID" id="67140675"/>
<dbReference type="GO" id="GO:0009507">
    <property type="term" value="C:chloroplast"/>
    <property type="evidence" value="ECO:0007669"/>
    <property type="project" value="UniProtKB-SubCell"/>
</dbReference>
<dbReference type="GO" id="GO:0005763">
    <property type="term" value="C:mitochondrial small ribosomal subunit"/>
    <property type="evidence" value="ECO:0007669"/>
    <property type="project" value="TreeGrafter"/>
</dbReference>
<dbReference type="GO" id="GO:0070181">
    <property type="term" value="F:small ribosomal subunit rRNA binding"/>
    <property type="evidence" value="ECO:0007669"/>
    <property type="project" value="TreeGrafter"/>
</dbReference>
<dbReference type="GO" id="GO:0003735">
    <property type="term" value="F:structural constituent of ribosome"/>
    <property type="evidence" value="ECO:0007669"/>
    <property type="project" value="InterPro"/>
</dbReference>
<dbReference type="GO" id="GO:0006412">
    <property type="term" value="P:translation"/>
    <property type="evidence" value="ECO:0007669"/>
    <property type="project" value="UniProtKB-UniRule"/>
</dbReference>
<dbReference type="FunFam" id="4.10.640.10:FF:000002">
    <property type="entry name" value="30S ribosomal protein S18, chloroplastic"/>
    <property type="match status" value="1"/>
</dbReference>
<dbReference type="Gene3D" id="4.10.640.10">
    <property type="entry name" value="Ribosomal protein S18"/>
    <property type="match status" value="1"/>
</dbReference>
<dbReference type="HAMAP" id="MF_00270">
    <property type="entry name" value="Ribosomal_bS18"/>
    <property type="match status" value="1"/>
</dbReference>
<dbReference type="InterPro" id="IPR001648">
    <property type="entry name" value="Ribosomal_bS18"/>
</dbReference>
<dbReference type="InterPro" id="IPR018275">
    <property type="entry name" value="Ribosomal_bS18_CS"/>
</dbReference>
<dbReference type="InterPro" id="IPR036870">
    <property type="entry name" value="Ribosomal_bS18_sf"/>
</dbReference>
<dbReference type="NCBIfam" id="TIGR00165">
    <property type="entry name" value="S18"/>
    <property type="match status" value="1"/>
</dbReference>
<dbReference type="PANTHER" id="PTHR13479">
    <property type="entry name" value="30S RIBOSOMAL PROTEIN S18"/>
    <property type="match status" value="1"/>
</dbReference>
<dbReference type="PANTHER" id="PTHR13479:SF40">
    <property type="entry name" value="SMALL RIBOSOMAL SUBUNIT PROTEIN BS18M"/>
    <property type="match status" value="1"/>
</dbReference>
<dbReference type="Pfam" id="PF01084">
    <property type="entry name" value="Ribosomal_S18"/>
    <property type="match status" value="1"/>
</dbReference>
<dbReference type="PRINTS" id="PR00974">
    <property type="entry name" value="RIBOSOMALS18"/>
</dbReference>
<dbReference type="SUPFAM" id="SSF46911">
    <property type="entry name" value="Ribosomal protein S18"/>
    <property type="match status" value="1"/>
</dbReference>
<dbReference type="PROSITE" id="PS00057">
    <property type="entry name" value="RIBOSOMAL_S18"/>
    <property type="match status" value="1"/>
</dbReference>
<name>RR18_HORVU</name>
<comment type="subunit">
    <text evidence="1">Part of the 30S ribosomal subunit.</text>
</comment>
<comment type="subcellular location">
    <subcellularLocation>
        <location>Plastid</location>
        <location>Chloroplast</location>
    </subcellularLocation>
</comment>
<comment type="similarity">
    <text evidence="1">Belongs to the bacterial ribosomal protein bS18 family.</text>
</comment>